<feature type="chain" id="PRO_1000214437" description="Large ribosomal subunit protein uL2">
    <location>
        <begin position="1"/>
        <end position="273"/>
    </location>
</feature>
<feature type="region of interest" description="Disordered" evidence="2">
    <location>
        <begin position="34"/>
        <end position="54"/>
    </location>
</feature>
<feature type="region of interest" description="Disordered" evidence="2">
    <location>
        <begin position="223"/>
        <end position="273"/>
    </location>
</feature>
<evidence type="ECO:0000255" key="1">
    <source>
        <dbReference type="HAMAP-Rule" id="MF_01320"/>
    </source>
</evidence>
<evidence type="ECO:0000256" key="2">
    <source>
        <dbReference type="SAM" id="MobiDB-lite"/>
    </source>
</evidence>
<evidence type="ECO:0000305" key="3"/>
<name>RL2_AZOVD</name>
<accession>C1DKL6</accession>
<comment type="function">
    <text evidence="1">One of the primary rRNA binding proteins. Required for association of the 30S and 50S subunits to form the 70S ribosome, for tRNA binding and peptide bond formation. It has been suggested to have peptidyltransferase activity; this is somewhat controversial. Makes several contacts with the 16S rRNA in the 70S ribosome.</text>
</comment>
<comment type="subunit">
    <text evidence="1">Part of the 50S ribosomal subunit. Forms a bridge to the 30S subunit in the 70S ribosome.</text>
</comment>
<comment type="similarity">
    <text evidence="1">Belongs to the universal ribosomal protein uL2 family.</text>
</comment>
<sequence>MAIVKCKPTSAGRRFVVKVVNQELHKGAPYAPLLEKKSKSGGRNNNGRITTRHIGGGHKQHYRLVDFRRNKDGIPATVERIEYDPNRTAHIALLKYADGERRYIIAPKGVVAGDQLISGVNAPIKAGNTLPLRNIPVGSTIHGVELKPGKGAQIARSAGASAQLVAREGAYVTLRLRSGEMRKVLADCRATLGEVSNSEHSLRSLGKAGAKRWRGVRPTVRGVAMNPVDHPHGGGEGRTSGGRHPVSPWGFPTKGAKTRSNKRTDNMIVRRRK</sequence>
<keyword id="KW-0687">Ribonucleoprotein</keyword>
<keyword id="KW-0689">Ribosomal protein</keyword>
<keyword id="KW-0694">RNA-binding</keyword>
<keyword id="KW-0699">rRNA-binding</keyword>
<proteinExistence type="inferred from homology"/>
<organism>
    <name type="scientific">Azotobacter vinelandii (strain DJ / ATCC BAA-1303)</name>
    <dbReference type="NCBI Taxonomy" id="322710"/>
    <lineage>
        <taxon>Bacteria</taxon>
        <taxon>Pseudomonadati</taxon>
        <taxon>Pseudomonadota</taxon>
        <taxon>Gammaproteobacteria</taxon>
        <taxon>Pseudomonadales</taxon>
        <taxon>Pseudomonadaceae</taxon>
        <taxon>Azotobacter</taxon>
    </lineage>
</organism>
<protein>
    <recommendedName>
        <fullName evidence="1">Large ribosomal subunit protein uL2</fullName>
    </recommendedName>
    <alternativeName>
        <fullName evidence="3">50S ribosomal protein L2</fullName>
    </alternativeName>
</protein>
<reference key="1">
    <citation type="journal article" date="2009" name="J. Bacteriol.">
        <title>Genome sequence of Azotobacter vinelandii, an obligate aerobe specialized to support diverse anaerobic metabolic processes.</title>
        <authorList>
            <person name="Setubal J.C."/>
            <person name="Dos Santos P."/>
            <person name="Goldman B.S."/>
            <person name="Ertesvaag H."/>
            <person name="Espin G."/>
            <person name="Rubio L.M."/>
            <person name="Valla S."/>
            <person name="Almeida N.F."/>
            <person name="Balasubramanian D."/>
            <person name="Cromes L."/>
            <person name="Curatti L."/>
            <person name="Du Z."/>
            <person name="Godsy E."/>
            <person name="Goodner B."/>
            <person name="Hellner-Burris K."/>
            <person name="Hernandez J.A."/>
            <person name="Houmiel K."/>
            <person name="Imperial J."/>
            <person name="Kennedy C."/>
            <person name="Larson T.J."/>
            <person name="Latreille P."/>
            <person name="Ligon L.S."/>
            <person name="Lu J."/>
            <person name="Maerk M."/>
            <person name="Miller N.M."/>
            <person name="Norton S."/>
            <person name="O'Carroll I.P."/>
            <person name="Paulsen I."/>
            <person name="Raulfs E.C."/>
            <person name="Roemer R."/>
            <person name="Rosser J."/>
            <person name="Segura D."/>
            <person name="Slater S."/>
            <person name="Stricklin S.L."/>
            <person name="Studholme D.J."/>
            <person name="Sun J."/>
            <person name="Viana C.J."/>
            <person name="Wallin E."/>
            <person name="Wang B."/>
            <person name="Wheeler C."/>
            <person name="Zhu H."/>
            <person name="Dean D.R."/>
            <person name="Dixon R."/>
            <person name="Wood D."/>
        </authorList>
    </citation>
    <scope>NUCLEOTIDE SEQUENCE [LARGE SCALE GENOMIC DNA]</scope>
    <source>
        <strain>DJ / ATCC BAA-1303</strain>
    </source>
</reference>
<gene>
    <name evidence="1" type="primary">rplB</name>
    <name type="ordered locus">Avin_06280</name>
</gene>
<dbReference type="EMBL" id="CP001157">
    <property type="protein sequence ID" value="ACO76879.1"/>
    <property type="molecule type" value="Genomic_DNA"/>
</dbReference>
<dbReference type="RefSeq" id="WP_012699305.1">
    <property type="nucleotide sequence ID" value="NC_012560.1"/>
</dbReference>
<dbReference type="SMR" id="C1DKL6"/>
<dbReference type="STRING" id="322710.Avin_06280"/>
<dbReference type="EnsemblBacteria" id="ACO76879">
    <property type="protein sequence ID" value="ACO76879"/>
    <property type="gene ID" value="Avin_06280"/>
</dbReference>
<dbReference type="GeneID" id="88184039"/>
<dbReference type="KEGG" id="avn:Avin_06280"/>
<dbReference type="eggNOG" id="COG0090">
    <property type="taxonomic scope" value="Bacteria"/>
</dbReference>
<dbReference type="HOGENOM" id="CLU_036235_2_1_6"/>
<dbReference type="OrthoDB" id="9778722at2"/>
<dbReference type="Proteomes" id="UP000002424">
    <property type="component" value="Chromosome"/>
</dbReference>
<dbReference type="GO" id="GO:0015934">
    <property type="term" value="C:large ribosomal subunit"/>
    <property type="evidence" value="ECO:0007669"/>
    <property type="project" value="InterPro"/>
</dbReference>
<dbReference type="GO" id="GO:0019843">
    <property type="term" value="F:rRNA binding"/>
    <property type="evidence" value="ECO:0007669"/>
    <property type="project" value="UniProtKB-UniRule"/>
</dbReference>
<dbReference type="GO" id="GO:0003735">
    <property type="term" value="F:structural constituent of ribosome"/>
    <property type="evidence" value="ECO:0007669"/>
    <property type="project" value="InterPro"/>
</dbReference>
<dbReference type="GO" id="GO:0016740">
    <property type="term" value="F:transferase activity"/>
    <property type="evidence" value="ECO:0007669"/>
    <property type="project" value="InterPro"/>
</dbReference>
<dbReference type="GO" id="GO:0002181">
    <property type="term" value="P:cytoplasmic translation"/>
    <property type="evidence" value="ECO:0007669"/>
    <property type="project" value="TreeGrafter"/>
</dbReference>
<dbReference type="FunFam" id="2.30.30.30:FF:000001">
    <property type="entry name" value="50S ribosomal protein L2"/>
    <property type="match status" value="1"/>
</dbReference>
<dbReference type="FunFam" id="2.40.50.140:FF:000003">
    <property type="entry name" value="50S ribosomal protein L2"/>
    <property type="match status" value="1"/>
</dbReference>
<dbReference type="FunFam" id="4.10.950.10:FF:000001">
    <property type="entry name" value="50S ribosomal protein L2"/>
    <property type="match status" value="1"/>
</dbReference>
<dbReference type="Gene3D" id="2.30.30.30">
    <property type="match status" value="1"/>
</dbReference>
<dbReference type="Gene3D" id="2.40.50.140">
    <property type="entry name" value="Nucleic acid-binding proteins"/>
    <property type="match status" value="1"/>
</dbReference>
<dbReference type="Gene3D" id="4.10.950.10">
    <property type="entry name" value="Ribosomal protein L2, domain 3"/>
    <property type="match status" value="1"/>
</dbReference>
<dbReference type="HAMAP" id="MF_01320_B">
    <property type="entry name" value="Ribosomal_uL2_B"/>
    <property type="match status" value="1"/>
</dbReference>
<dbReference type="InterPro" id="IPR012340">
    <property type="entry name" value="NA-bd_OB-fold"/>
</dbReference>
<dbReference type="InterPro" id="IPR014722">
    <property type="entry name" value="Rib_uL2_dom2"/>
</dbReference>
<dbReference type="InterPro" id="IPR002171">
    <property type="entry name" value="Ribosomal_uL2"/>
</dbReference>
<dbReference type="InterPro" id="IPR005880">
    <property type="entry name" value="Ribosomal_uL2_bac/org-type"/>
</dbReference>
<dbReference type="InterPro" id="IPR022669">
    <property type="entry name" value="Ribosomal_uL2_C"/>
</dbReference>
<dbReference type="InterPro" id="IPR022671">
    <property type="entry name" value="Ribosomal_uL2_CS"/>
</dbReference>
<dbReference type="InterPro" id="IPR014726">
    <property type="entry name" value="Ribosomal_uL2_dom3"/>
</dbReference>
<dbReference type="InterPro" id="IPR022666">
    <property type="entry name" value="Ribosomal_uL2_RNA-bd_dom"/>
</dbReference>
<dbReference type="InterPro" id="IPR008991">
    <property type="entry name" value="Translation_prot_SH3-like_sf"/>
</dbReference>
<dbReference type="NCBIfam" id="TIGR01171">
    <property type="entry name" value="rplB_bact"/>
    <property type="match status" value="1"/>
</dbReference>
<dbReference type="PANTHER" id="PTHR13691:SF5">
    <property type="entry name" value="LARGE RIBOSOMAL SUBUNIT PROTEIN UL2M"/>
    <property type="match status" value="1"/>
</dbReference>
<dbReference type="PANTHER" id="PTHR13691">
    <property type="entry name" value="RIBOSOMAL PROTEIN L2"/>
    <property type="match status" value="1"/>
</dbReference>
<dbReference type="Pfam" id="PF00181">
    <property type="entry name" value="Ribosomal_L2"/>
    <property type="match status" value="1"/>
</dbReference>
<dbReference type="Pfam" id="PF03947">
    <property type="entry name" value="Ribosomal_L2_C"/>
    <property type="match status" value="1"/>
</dbReference>
<dbReference type="PIRSF" id="PIRSF002158">
    <property type="entry name" value="Ribosomal_L2"/>
    <property type="match status" value="1"/>
</dbReference>
<dbReference type="SMART" id="SM01383">
    <property type="entry name" value="Ribosomal_L2"/>
    <property type="match status" value="1"/>
</dbReference>
<dbReference type="SMART" id="SM01382">
    <property type="entry name" value="Ribosomal_L2_C"/>
    <property type="match status" value="1"/>
</dbReference>
<dbReference type="SUPFAM" id="SSF50249">
    <property type="entry name" value="Nucleic acid-binding proteins"/>
    <property type="match status" value="1"/>
</dbReference>
<dbReference type="SUPFAM" id="SSF50104">
    <property type="entry name" value="Translation proteins SH3-like domain"/>
    <property type="match status" value="1"/>
</dbReference>
<dbReference type="PROSITE" id="PS00467">
    <property type="entry name" value="RIBOSOMAL_L2"/>
    <property type="match status" value="1"/>
</dbReference>